<accession>B2K203</accession>
<sequence length="313" mass="34785">MNDIENLDRPPAIFIMGPTASGKTALSIALRQRLPVELVSVDSALIYRGMDIGTAKPSAQELALAPHRLIDIRDPAESYSAADFRKDALKEMADITAAGRIPLLVGGTMLYFKALLDGLSPLPSADPQVRQRIEQQASELGWGALHQQLAVIDPVAAARIHPNDPQRLSRALEVFFISGKTLTELTKISGETLPYRVHQFAIAPASRELLHQRIELRFHQMLDAGFEAEARVLFDRGDLHTDLPAIRCVGYRQMWSYLSGEIDYNDMVYRGVCATRQLAKRQMTWLRGWSSVQWLDSDKPGEALDSVIQVVSA</sequence>
<feature type="chain" id="PRO_1000098705" description="tRNA dimethylallyltransferase">
    <location>
        <begin position="1"/>
        <end position="313"/>
    </location>
</feature>
<feature type="region of interest" description="Interaction with substrate tRNA" evidence="1">
    <location>
        <begin position="42"/>
        <end position="45"/>
    </location>
</feature>
<feature type="region of interest" description="Interaction with substrate tRNA" evidence="1">
    <location>
        <begin position="166"/>
        <end position="170"/>
    </location>
</feature>
<feature type="region of interest" description="Interaction with substrate tRNA" evidence="1">
    <location>
        <begin position="247"/>
        <end position="252"/>
    </location>
</feature>
<feature type="binding site" evidence="1">
    <location>
        <begin position="17"/>
        <end position="24"/>
    </location>
    <ligand>
        <name>ATP</name>
        <dbReference type="ChEBI" id="CHEBI:30616"/>
    </ligand>
</feature>
<feature type="binding site" evidence="1">
    <location>
        <begin position="19"/>
        <end position="24"/>
    </location>
    <ligand>
        <name>substrate</name>
    </ligand>
</feature>
<feature type="site" description="Interaction with substrate tRNA" evidence="1">
    <location>
        <position position="108"/>
    </location>
</feature>
<feature type="site" description="Interaction with substrate tRNA" evidence="1">
    <location>
        <position position="130"/>
    </location>
</feature>
<reference key="1">
    <citation type="submission" date="2008-04" db="EMBL/GenBank/DDBJ databases">
        <title>Complete sequence of Yersinia pseudotuberculosis PB1/+.</title>
        <authorList>
            <person name="Copeland A."/>
            <person name="Lucas S."/>
            <person name="Lapidus A."/>
            <person name="Glavina del Rio T."/>
            <person name="Dalin E."/>
            <person name="Tice H."/>
            <person name="Bruce D."/>
            <person name="Goodwin L."/>
            <person name="Pitluck S."/>
            <person name="Munk A.C."/>
            <person name="Brettin T."/>
            <person name="Detter J.C."/>
            <person name="Han C."/>
            <person name="Tapia R."/>
            <person name="Schmutz J."/>
            <person name="Larimer F."/>
            <person name="Land M."/>
            <person name="Hauser L."/>
            <person name="Challacombe J.F."/>
            <person name="Green L."/>
            <person name="Lindler L.E."/>
            <person name="Nikolich M.P."/>
            <person name="Richardson P."/>
        </authorList>
    </citation>
    <scope>NUCLEOTIDE SEQUENCE [LARGE SCALE GENOMIC DNA]</scope>
    <source>
        <strain>PB1/+</strain>
    </source>
</reference>
<name>MIAA_YERPB</name>
<evidence type="ECO:0000255" key="1">
    <source>
        <dbReference type="HAMAP-Rule" id="MF_00185"/>
    </source>
</evidence>
<gene>
    <name evidence="1" type="primary">miaA</name>
    <name type="ordered locus">YPTS_0452</name>
</gene>
<proteinExistence type="inferred from homology"/>
<keyword id="KW-0067">ATP-binding</keyword>
<keyword id="KW-0460">Magnesium</keyword>
<keyword id="KW-0547">Nucleotide-binding</keyword>
<keyword id="KW-0808">Transferase</keyword>
<keyword id="KW-0819">tRNA processing</keyword>
<organism>
    <name type="scientific">Yersinia pseudotuberculosis serotype IB (strain PB1/+)</name>
    <dbReference type="NCBI Taxonomy" id="502801"/>
    <lineage>
        <taxon>Bacteria</taxon>
        <taxon>Pseudomonadati</taxon>
        <taxon>Pseudomonadota</taxon>
        <taxon>Gammaproteobacteria</taxon>
        <taxon>Enterobacterales</taxon>
        <taxon>Yersiniaceae</taxon>
        <taxon>Yersinia</taxon>
    </lineage>
</organism>
<comment type="function">
    <text evidence="1">Catalyzes the transfer of a dimethylallyl group onto the adenine at position 37 in tRNAs that read codons beginning with uridine, leading to the formation of N6-(dimethylallyl)adenosine (i(6)A).</text>
</comment>
<comment type="catalytic activity">
    <reaction evidence="1">
        <text>adenosine(37) in tRNA + dimethylallyl diphosphate = N(6)-dimethylallyladenosine(37) in tRNA + diphosphate</text>
        <dbReference type="Rhea" id="RHEA:26482"/>
        <dbReference type="Rhea" id="RHEA-COMP:10162"/>
        <dbReference type="Rhea" id="RHEA-COMP:10375"/>
        <dbReference type="ChEBI" id="CHEBI:33019"/>
        <dbReference type="ChEBI" id="CHEBI:57623"/>
        <dbReference type="ChEBI" id="CHEBI:74411"/>
        <dbReference type="ChEBI" id="CHEBI:74415"/>
        <dbReference type="EC" id="2.5.1.75"/>
    </reaction>
</comment>
<comment type="cofactor">
    <cofactor evidence="1">
        <name>Mg(2+)</name>
        <dbReference type="ChEBI" id="CHEBI:18420"/>
    </cofactor>
</comment>
<comment type="subunit">
    <text evidence="1">Monomer.</text>
</comment>
<comment type="similarity">
    <text evidence="1">Belongs to the IPP transferase family.</text>
</comment>
<protein>
    <recommendedName>
        <fullName evidence="1">tRNA dimethylallyltransferase</fullName>
        <ecNumber evidence="1">2.5.1.75</ecNumber>
    </recommendedName>
    <alternativeName>
        <fullName evidence="1">Dimethylallyl diphosphate:tRNA dimethylallyltransferase</fullName>
        <shortName evidence="1">DMAPP:tRNA dimethylallyltransferase</shortName>
        <shortName evidence="1">DMATase</shortName>
    </alternativeName>
    <alternativeName>
        <fullName evidence="1">Isopentenyl-diphosphate:tRNA isopentenyltransferase</fullName>
        <shortName evidence="1">IPP transferase</shortName>
        <shortName evidence="1">IPPT</shortName>
        <shortName evidence="1">IPTase</shortName>
    </alternativeName>
</protein>
<dbReference type="EC" id="2.5.1.75" evidence="1"/>
<dbReference type="EMBL" id="CP001048">
    <property type="protein sequence ID" value="ACC87438.1"/>
    <property type="molecule type" value="Genomic_DNA"/>
</dbReference>
<dbReference type="RefSeq" id="WP_002209149.1">
    <property type="nucleotide sequence ID" value="NZ_CP009780.1"/>
</dbReference>
<dbReference type="SMR" id="B2K203"/>
<dbReference type="GeneID" id="57974235"/>
<dbReference type="KEGG" id="ypb:YPTS_0452"/>
<dbReference type="PATRIC" id="fig|502801.10.peg.4127"/>
<dbReference type="GO" id="GO:0005524">
    <property type="term" value="F:ATP binding"/>
    <property type="evidence" value="ECO:0007669"/>
    <property type="project" value="UniProtKB-UniRule"/>
</dbReference>
<dbReference type="GO" id="GO:0052381">
    <property type="term" value="F:tRNA dimethylallyltransferase activity"/>
    <property type="evidence" value="ECO:0007669"/>
    <property type="project" value="UniProtKB-UniRule"/>
</dbReference>
<dbReference type="GO" id="GO:0006400">
    <property type="term" value="P:tRNA modification"/>
    <property type="evidence" value="ECO:0007669"/>
    <property type="project" value="TreeGrafter"/>
</dbReference>
<dbReference type="FunFam" id="1.10.20.140:FF:000001">
    <property type="entry name" value="tRNA dimethylallyltransferase"/>
    <property type="match status" value="1"/>
</dbReference>
<dbReference type="Gene3D" id="1.10.20.140">
    <property type="match status" value="1"/>
</dbReference>
<dbReference type="Gene3D" id="3.40.50.300">
    <property type="entry name" value="P-loop containing nucleotide triphosphate hydrolases"/>
    <property type="match status" value="1"/>
</dbReference>
<dbReference type="HAMAP" id="MF_00185">
    <property type="entry name" value="IPP_trans"/>
    <property type="match status" value="1"/>
</dbReference>
<dbReference type="InterPro" id="IPR039657">
    <property type="entry name" value="Dimethylallyltransferase"/>
</dbReference>
<dbReference type="InterPro" id="IPR018022">
    <property type="entry name" value="IPT"/>
</dbReference>
<dbReference type="InterPro" id="IPR027417">
    <property type="entry name" value="P-loop_NTPase"/>
</dbReference>
<dbReference type="NCBIfam" id="TIGR00174">
    <property type="entry name" value="miaA"/>
    <property type="match status" value="1"/>
</dbReference>
<dbReference type="PANTHER" id="PTHR11088">
    <property type="entry name" value="TRNA DIMETHYLALLYLTRANSFERASE"/>
    <property type="match status" value="1"/>
</dbReference>
<dbReference type="PANTHER" id="PTHR11088:SF60">
    <property type="entry name" value="TRNA DIMETHYLALLYLTRANSFERASE"/>
    <property type="match status" value="1"/>
</dbReference>
<dbReference type="Pfam" id="PF01715">
    <property type="entry name" value="IPPT"/>
    <property type="match status" value="1"/>
</dbReference>
<dbReference type="SUPFAM" id="SSF52540">
    <property type="entry name" value="P-loop containing nucleoside triphosphate hydrolases"/>
    <property type="match status" value="1"/>
</dbReference>